<comment type="function">
    <text evidence="1">May be involved in the regulation of photosystem II.</text>
</comment>
<comment type="subcellular location">
    <subcellularLocation>
        <location evidence="1">Plastid</location>
        <location evidence="1">Chloroplast thylakoid membrane</location>
    </subcellularLocation>
    <text evidence="1">Associated with the photosystem II complex.</text>
</comment>
<comment type="similarity">
    <text evidence="2">Belongs to the PsbP family.</text>
</comment>
<proteinExistence type="inferred from homology"/>
<sequence>MASTQCFLHQHALSSSAARTTSSVSSQRYVSSLKPNQLVCRAQKQSSPQEDDGNSVVVSRRLALTVLIGAAAIGSKVSPADAAYGEAANVFGKPKENTDFLAYNGDGFKLQVPAKWNPSKEVEFPGQVLRYEDNFDSTSNLIVTVTPTDKKSITDYGSPEEFLTQVDFLLGKQAYFGKTDSEGGFESGAVATANLLETSSSTVGGKEYYILSVLTRTADGDEGGKHQLISATVNGGKLYICKAQAGDKRWFKGARKFVENAATSFSVA</sequence>
<organism>
    <name type="scientific">Nicotiana tabacum</name>
    <name type="common">Common tobacco</name>
    <dbReference type="NCBI Taxonomy" id="4097"/>
    <lineage>
        <taxon>Eukaryota</taxon>
        <taxon>Viridiplantae</taxon>
        <taxon>Streptophyta</taxon>
        <taxon>Embryophyta</taxon>
        <taxon>Tracheophyta</taxon>
        <taxon>Spermatophyta</taxon>
        <taxon>Magnoliopsida</taxon>
        <taxon>eudicotyledons</taxon>
        <taxon>Gunneridae</taxon>
        <taxon>Pentapetalae</taxon>
        <taxon>asterids</taxon>
        <taxon>lamiids</taxon>
        <taxon>Solanales</taxon>
        <taxon>Solanaceae</taxon>
        <taxon>Nicotianoideae</taxon>
        <taxon>Nicotianeae</taxon>
        <taxon>Nicotiana</taxon>
    </lineage>
</organism>
<reference key="1">
    <citation type="journal article" date="1991" name="Plant Mol. Biol.">
        <title>Nucleotide sequence of gene oee2-A and its cDNA encoding 23kDA polypeptide of oxygen-evolving complex in photosystem II from tobacco.</title>
        <authorList>
            <person name="Hua S."/>
            <person name="Dube S.K."/>
            <person name="Barnett N.M."/>
            <person name="Kung S.D."/>
        </authorList>
    </citation>
    <scope>NUCLEOTIDE SEQUENCE [GENOMIC DNA]</scope>
    <source>
        <strain>cv. NK 326</strain>
        <strain>cv. SR1</strain>
    </source>
</reference>
<evidence type="ECO:0000250" key="1"/>
<evidence type="ECO:0000305" key="2"/>
<accession>Q7DM39</accession>
<accession>Q43363</accession>
<keyword id="KW-0150">Chloroplast</keyword>
<keyword id="KW-0472">Membrane</keyword>
<keyword id="KW-0602">Photosynthesis</keyword>
<keyword id="KW-0604">Photosystem II</keyword>
<keyword id="KW-0934">Plastid</keyword>
<keyword id="KW-1185">Reference proteome</keyword>
<keyword id="KW-0793">Thylakoid</keyword>
<keyword id="KW-0809">Transit peptide</keyword>
<protein>
    <recommendedName>
        <fullName>Oxygen-evolving enhancer protein 2-1, chloroplastic</fullName>
        <shortName>OEE2</shortName>
    </recommendedName>
    <alternativeName>
        <fullName>23 kDa subunit of oxygen evolving system of photosystem II</fullName>
    </alternativeName>
    <alternativeName>
        <fullName>23 kDa thylakoid membrane protein</fullName>
    </alternativeName>
    <alternativeName>
        <fullName>OEC 23 kDa subunit</fullName>
    </alternativeName>
</protein>
<dbReference type="EMBL" id="X58909">
    <property type="protein sequence ID" value="CAA41712.1"/>
    <property type="molecule type" value="Genomic_DNA"/>
</dbReference>
<dbReference type="EMBL" id="X58910">
    <property type="protein sequence ID" value="CAA41713.1"/>
    <property type="molecule type" value="Genomic_DNA"/>
</dbReference>
<dbReference type="PIR" id="S17446">
    <property type="entry name" value="S17446"/>
</dbReference>
<dbReference type="SMR" id="Q7DM39"/>
<dbReference type="STRING" id="4097.Q7DM39"/>
<dbReference type="PaxDb" id="4097-Q7DM39"/>
<dbReference type="ProMEX" id="Q7DM39"/>
<dbReference type="OMA" id="AVECRCA"/>
<dbReference type="OrthoDB" id="507333at2759"/>
<dbReference type="PhylomeDB" id="Q7DM39"/>
<dbReference type="Proteomes" id="UP000084051">
    <property type="component" value="Unplaced"/>
</dbReference>
<dbReference type="GO" id="GO:0009535">
    <property type="term" value="C:chloroplast thylakoid membrane"/>
    <property type="evidence" value="ECO:0007669"/>
    <property type="project" value="UniProtKB-SubCell"/>
</dbReference>
<dbReference type="GO" id="GO:0019898">
    <property type="term" value="C:extrinsic component of membrane"/>
    <property type="evidence" value="ECO:0007669"/>
    <property type="project" value="InterPro"/>
</dbReference>
<dbReference type="GO" id="GO:0009654">
    <property type="term" value="C:photosystem II oxygen evolving complex"/>
    <property type="evidence" value="ECO:0007669"/>
    <property type="project" value="InterPro"/>
</dbReference>
<dbReference type="GO" id="GO:0005509">
    <property type="term" value="F:calcium ion binding"/>
    <property type="evidence" value="ECO:0007669"/>
    <property type="project" value="InterPro"/>
</dbReference>
<dbReference type="GO" id="GO:0015979">
    <property type="term" value="P:photosynthesis"/>
    <property type="evidence" value="ECO:0007669"/>
    <property type="project" value="UniProtKB-KW"/>
</dbReference>
<dbReference type="Gene3D" id="3.40.1000.10">
    <property type="entry name" value="Mog1/PsbP, alpha/beta/alpha sandwich"/>
    <property type="match status" value="1"/>
</dbReference>
<dbReference type="InterPro" id="IPR016123">
    <property type="entry name" value="Mog1/PsbP_a/b/a-sand"/>
</dbReference>
<dbReference type="InterPro" id="IPR002683">
    <property type="entry name" value="PsbP_C"/>
</dbReference>
<dbReference type="PANTHER" id="PTHR31407">
    <property type="match status" value="1"/>
</dbReference>
<dbReference type="PANTHER" id="PTHR31407:SF6">
    <property type="entry name" value="OXYGEN-EVOLVING ENHANCER PROTEIN 2-1, CHLOROPLASTIC"/>
    <property type="match status" value="1"/>
</dbReference>
<dbReference type="Pfam" id="PF01789">
    <property type="entry name" value="PsbP"/>
    <property type="match status" value="1"/>
</dbReference>
<dbReference type="SUPFAM" id="SSF55724">
    <property type="entry name" value="Mog1p/PsbP-like"/>
    <property type="match status" value="1"/>
</dbReference>
<gene>
    <name type="primary">PSBP1</name>
    <name type="synonym">OEE2-A</name>
</gene>
<feature type="transit peptide" description="Chloroplast" evidence="1">
    <location>
        <begin position="1"/>
        <end position="82"/>
    </location>
</feature>
<feature type="chain" id="PRO_0000029583" description="Oxygen-evolving enhancer protein 2-1, chloroplastic">
    <location>
        <begin position="83"/>
        <end position="268"/>
    </location>
</feature>
<name>PSBP1_TOBAC</name>